<accession>Q298S5</accession>
<dbReference type="EMBL" id="CM000070">
    <property type="protein sequence ID" value="EAL27880.1"/>
    <property type="molecule type" value="Genomic_DNA"/>
</dbReference>
<dbReference type="RefSeq" id="XP_001358737.1">
    <property type="nucleotide sequence ID" value="XM_001358700.4"/>
</dbReference>
<dbReference type="SMR" id="Q298S5"/>
<dbReference type="FunCoup" id="Q298S5">
    <property type="interactions" value="1896"/>
</dbReference>
<dbReference type="STRING" id="46245.Q298S5"/>
<dbReference type="EnsemblMetazoa" id="FBtr0283613">
    <property type="protein sequence ID" value="FBpp0282051"/>
    <property type="gene ID" value="FBgn0079180"/>
</dbReference>
<dbReference type="GeneID" id="4801689"/>
<dbReference type="KEGG" id="dpo:4801689"/>
<dbReference type="CTD" id="55706"/>
<dbReference type="eggNOG" id="KOG4358">
    <property type="taxonomic scope" value="Eukaryota"/>
</dbReference>
<dbReference type="HOGENOM" id="CLU_027343_0_0_1"/>
<dbReference type="InParanoid" id="Q298S5"/>
<dbReference type="OMA" id="ILCQQHL"/>
<dbReference type="PhylomeDB" id="Q298S5"/>
<dbReference type="Proteomes" id="UP000001819">
    <property type="component" value="Chromosome 2"/>
</dbReference>
<dbReference type="Bgee" id="FBgn0079180">
    <property type="expression patterns" value="Expressed in female reproductive system and 2 other cell types or tissues"/>
</dbReference>
<dbReference type="GO" id="GO:0031965">
    <property type="term" value="C:nuclear membrane"/>
    <property type="evidence" value="ECO:0007669"/>
    <property type="project" value="UniProtKB-SubCell"/>
</dbReference>
<dbReference type="GO" id="GO:0070762">
    <property type="term" value="C:nuclear pore transmembrane ring"/>
    <property type="evidence" value="ECO:0007669"/>
    <property type="project" value="TreeGrafter"/>
</dbReference>
<dbReference type="GO" id="GO:0030674">
    <property type="term" value="F:protein-macromolecule adaptor activity"/>
    <property type="evidence" value="ECO:0007669"/>
    <property type="project" value="TreeGrafter"/>
</dbReference>
<dbReference type="GO" id="GO:0051028">
    <property type="term" value="P:mRNA transport"/>
    <property type="evidence" value="ECO:0007669"/>
    <property type="project" value="UniProtKB-KW"/>
</dbReference>
<dbReference type="GO" id="GO:0006999">
    <property type="term" value="P:nuclear pore organization"/>
    <property type="evidence" value="ECO:0007669"/>
    <property type="project" value="TreeGrafter"/>
</dbReference>
<dbReference type="GO" id="GO:0015031">
    <property type="term" value="P:protein transport"/>
    <property type="evidence" value="ECO:0007669"/>
    <property type="project" value="UniProtKB-KW"/>
</dbReference>
<dbReference type="InterPro" id="IPR019049">
    <property type="entry name" value="Nucleoporin_prot_Ndc1/Nup"/>
</dbReference>
<dbReference type="PANTHER" id="PTHR13269">
    <property type="entry name" value="NUCLEOPORIN NDC1"/>
    <property type="match status" value="1"/>
</dbReference>
<dbReference type="PANTHER" id="PTHR13269:SF6">
    <property type="entry name" value="NUCLEOPORIN NDC1"/>
    <property type="match status" value="1"/>
</dbReference>
<dbReference type="Pfam" id="PF09531">
    <property type="entry name" value="Ndc1_Nup"/>
    <property type="match status" value="1"/>
</dbReference>
<reference key="1">
    <citation type="journal article" date="2005" name="Genome Res.">
        <title>Comparative genome sequencing of Drosophila pseudoobscura: chromosomal, gene, and cis-element evolution.</title>
        <authorList>
            <person name="Richards S."/>
            <person name="Liu Y."/>
            <person name="Bettencourt B.R."/>
            <person name="Hradecky P."/>
            <person name="Letovsky S."/>
            <person name="Nielsen R."/>
            <person name="Thornton K."/>
            <person name="Hubisz M.J."/>
            <person name="Chen R."/>
            <person name="Meisel R.P."/>
            <person name="Couronne O."/>
            <person name="Hua S."/>
            <person name="Smith M.A."/>
            <person name="Zhang P."/>
            <person name="Liu J."/>
            <person name="Bussemaker H.J."/>
            <person name="van Batenburg M.F."/>
            <person name="Howells S.L."/>
            <person name="Scherer S.E."/>
            <person name="Sodergren E."/>
            <person name="Matthews B.B."/>
            <person name="Crosby M.A."/>
            <person name="Schroeder A.J."/>
            <person name="Ortiz-Barrientos D."/>
            <person name="Rives C.M."/>
            <person name="Metzker M.L."/>
            <person name="Muzny D.M."/>
            <person name="Scott G."/>
            <person name="Steffen D."/>
            <person name="Wheeler D.A."/>
            <person name="Worley K.C."/>
            <person name="Havlak P."/>
            <person name="Durbin K.J."/>
            <person name="Egan A."/>
            <person name="Gill R."/>
            <person name="Hume J."/>
            <person name="Morgan M.B."/>
            <person name="Miner G."/>
            <person name="Hamilton C."/>
            <person name="Huang Y."/>
            <person name="Waldron L."/>
            <person name="Verduzco D."/>
            <person name="Clerc-Blankenburg K.P."/>
            <person name="Dubchak I."/>
            <person name="Noor M.A.F."/>
            <person name="Anderson W."/>
            <person name="White K.P."/>
            <person name="Clark A.G."/>
            <person name="Schaeffer S.W."/>
            <person name="Gelbart W.M."/>
            <person name="Weinstock G.M."/>
            <person name="Gibbs R.A."/>
        </authorList>
    </citation>
    <scope>NUCLEOTIDE SEQUENCE [LARGE SCALE GENOMIC DNA]</scope>
    <source>
        <strain>MV2-25 / Tucson 14011-0121.94</strain>
    </source>
</reference>
<gene>
    <name type="primary">Ndc1</name>
    <name type="ORF">GA19183</name>
</gene>
<sequence>MSHLSTINACKLLLFRRCLQAVLLTVGIQFLLLTIFLLFVNFQLLRPLHWISVTLSLVCSMYTWFASIPLVGAVVLYGMILCQQHLAERLYCPTRFRWLVHYAPRKLLFLAAHLLVGYLTAWLYTGYMHTDYRHLWYKCYDQECISAYHVYLLGMGIFAGCYYFVSVHMRQEVEIEFPIVNHLWGEKLREVLYSSLARSLIKSLLPTLAYTLLFWLFGGVVCHKLSHIFAVDLDERLEGFFGVATNGRLLFYGWLLTSQILSNMHLMRCFYSMFLSEEFPLAITKNRAAFVQEKEVTVVAALGLSNVYVVQCLAAKYLYNLVTAGDAEKRSELFQLTEPGNRPANWRSLCDQCLSLFGNFTDELIDSMQKISVLKGSPSSPPLTPISENASASLMAERVLTRQYNQMHGIRAIVSPRSNAVIDRPVDRIHRVPDWCERTSMQLEQSLQLLINRIPGIVYMFTEPEGAKTAFLLTHSLPLVFVIQALSQICVFSLKEDRYGVVQTDLPDIIRSMSRLKGELDKLSSVASNLRGPGSSFSVLRGAVRRSLFHICVAFGEYLSELIPSGEELHQLQTVINQE</sequence>
<proteinExistence type="inferred from homology"/>
<organism>
    <name type="scientific">Drosophila pseudoobscura pseudoobscura</name>
    <name type="common">Fruit fly</name>
    <dbReference type="NCBI Taxonomy" id="46245"/>
    <lineage>
        <taxon>Eukaryota</taxon>
        <taxon>Metazoa</taxon>
        <taxon>Ecdysozoa</taxon>
        <taxon>Arthropoda</taxon>
        <taxon>Hexapoda</taxon>
        <taxon>Insecta</taxon>
        <taxon>Pterygota</taxon>
        <taxon>Neoptera</taxon>
        <taxon>Endopterygota</taxon>
        <taxon>Diptera</taxon>
        <taxon>Brachycera</taxon>
        <taxon>Muscomorpha</taxon>
        <taxon>Ephydroidea</taxon>
        <taxon>Drosophilidae</taxon>
        <taxon>Drosophila</taxon>
        <taxon>Sophophora</taxon>
    </lineage>
</organism>
<name>NDC1_DROPS</name>
<evidence type="ECO:0000250" key="1"/>
<evidence type="ECO:0000255" key="2"/>
<evidence type="ECO:0000305" key="3"/>
<comment type="function">
    <text evidence="1">Component of the nuclear pore complex (NPC), which plays a key role in de novo assembly and insertion of NPC in the nuclear envelope.</text>
</comment>
<comment type="subcellular location">
    <subcellularLocation>
        <location evidence="1">Nucleus</location>
        <location evidence="1">Nuclear pore complex</location>
    </subcellularLocation>
    <subcellularLocation>
        <location evidence="1">Nucleus membrane</location>
        <topology evidence="1">Multi-pass membrane protein</topology>
    </subcellularLocation>
    <text evidence="1">Central core structure of the nuclear pore complex.</text>
</comment>
<comment type="similarity">
    <text evidence="3">Belongs to the NDC1 family.</text>
</comment>
<feature type="chain" id="PRO_0000235249" description="Nucleoporin Ndc1">
    <location>
        <begin position="1"/>
        <end position="579"/>
    </location>
</feature>
<feature type="topological domain" description="Cytoplasmic" evidence="2">
    <location>
        <begin position="1"/>
        <end position="21"/>
    </location>
</feature>
<feature type="transmembrane region" description="Helical; Name=1" evidence="2">
    <location>
        <begin position="22"/>
        <end position="42"/>
    </location>
</feature>
<feature type="topological domain" description="Perinuclear space" evidence="2">
    <location>
        <begin position="43"/>
        <end position="60"/>
    </location>
</feature>
<feature type="transmembrane region" description="Helical; Name=2" evidence="2">
    <location>
        <begin position="61"/>
        <end position="81"/>
    </location>
</feature>
<feature type="topological domain" description="Cytoplasmic" evidence="2">
    <location>
        <begin position="82"/>
        <end position="106"/>
    </location>
</feature>
<feature type="transmembrane region" description="Helical; Name=3" evidence="2">
    <location>
        <begin position="107"/>
        <end position="127"/>
    </location>
</feature>
<feature type="topological domain" description="Perinuclear space" evidence="2">
    <location>
        <begin position="128"/>
        <end position="144"/>
    </location>
</feature>
<feature type="transmembrane region" description="Helical; Name=4" evidence="2">
    <location>
        <begin position="145"/>
        <end position="165"/>
    </location>
</feature>
<feature type="topological domain" description="Cytoplasmic" evidence="2">
    <location>
        <begin position="166"/>
        <end position="202"/>
    </location>
</feature>
<feature type="transmembrane region" description="Helical; Name=5" evidence="2">
    <location>
        <begin position="203"/>
        <end position="223"/>
    </location>
</feature>
<feature type="topological domain" description="Perinuclear space" evidence="2">
    <location>
        <begin position="224"/>
        <end position="236"/>
    </location>
</feature>
<feature type="transmembrane region" description="Helical; Name=6" evidence="2">
    <location>
        <begin position="237"/>
        <end position="257"/>
    </location>
</feature>
<feature type="topological domain" description="Cytoplasmic" evidence="2">
    <location>
        <begin position="258"/>
        <end position="579"/>
    </location>
</feature>
<protein>
    <recommendedName>
        <fullName>Nucleoporin Ndc1</fullName>
    </recommendedName>
</protein>
<keyword id="KW-0472">Membrane</keyword>
<keyword id="KW-0509">mRNA transport</keyword>
<keyword id="KW-0906">Nuclear pore complex</keyword>
<keyword id="KW-0539">Nucleus</keyword>
<keyword id="KW-0653">Protein transport</keyword>
<keyword id="KW-1185">Reference proteome</keyword>
<keyword id="KW-0811">Translocation</keyword>
<keyword id="KW-0812">Transmembrane</keyword>
<keyword id="KW-1133">Transmembrane helix</keyword>
<keyword id="KW-0813">Transport</keyword>